<organism>
    <name type="scientific">Gallus gallus</name>
    <name type="common">Chicken</name>
    <dbReference type="NCBI Taxonomy" id="9031"/>
    <lineage>
        <taxon>Eukaryota</taxon>
        <taxon>Metazoa</taxon>
        <taxon>Chordata</taxon>
        <taxon>Craniata</taxon>
        <taxon>Vertebrata</taxon>
        <taxon>Euteleostomi</taxon>
        <taxon>Archelosauria</taxon>
        <taxon>Archosauria</taxon>
        <taxon>Dinosauria</taxon>
        <taxon>Saurischia</taxon>
        <taxon>Theropoda</taxon>
        <taxon>Coelurosauria</taxon>
        <taxon>Aves</taxon>
        <taxon>Neognathae</taxon>
        <taxon>Galloanserae</taxon>
        <taxon>Galliformes</taxon>
        <taxon>Phasianidae</taxon>
        <taxon>Phasianinae</taxon>
        <taxon>Gallus</taxon>
    </lineage>
</organism>
<reference key="1">
    <citation type="journal article" date="1991" name="Leukemia">
        <title>cDNA cloning of a homeobox-containing gene expressed in avian myeloblastic virus-transformed chicken monoblastic leukaemia cells.</title>
        <authorList>
            <person name="Crompton M.R."/>
            <person name="McGregor A.D."/>
            <person name="Goodwin G.H."/>
        </authorList>
    </citation>
    <scope>NUCLEOTIDE SEQUENCE [MRNA]</scope>
</reference>
<name>HXD8_CHICK</name>
<protein>
    <recommendedName>
        <fullName>Homeobox protein Hox-D8</fullName>
    </recommendedName>
    <alternativeName>
        <fullName>Homeobox protein Hox-M</fullName>
        <shortName>Chox-M</shortName>
    </alternativeName>
</protein>
<keyword id="KW-0217">Developmental protein</keyword>
<keyword id="KW-0238">DNA-binding</keyword>
<keyword id="KW-0371">Homeobox</keyword>
<keyword id="KW-0539">Nucleus</keyword>
<keyword id="KW-1185">Reference proteome</keyword>
<keyword id="KW-0804">Transcription</keyword>
<keyword id="KW-0805">Transcription regulation</keyword>
<evidence type="ECO:0000255" key="1">
    <source>
        <dbReference type="PROSITE-ProRule" id="PRU00108"/>
    </source>
</evidence>
<evidence type="ECO:0000256" key="2">
    <source>
        <dbReference type="SAM" id="MobiDB-lite"/>
    </source>
</evidence>
<evidence type="ECO:0000305" key="3"/>
<sequence>MSSYFVNPLYSKYKAAAAAAAAVAAGEPLPAPYYDCHFAPERQQIFTTQQEAELVQYPDCKSSSANIGEEPDHLNQSSSPAQMFPWMRPQAAPGRRRGRQTYSRFQTLELEKEFLFNPYLTRKRRIEVSHALGLTERQVKIWFQNRRMKWKKENNKDKFPASKQEGKEGEAKKETHDLEDDRAESHTN</sequence>
<accession>P23459</accession>
<feature type="chain" id="PRO_0000200218" description="Homeobox protein Hox-D8">
    <location>
        <begin position="1"/>
        <end position="188"/>
    </location>
</feature>
<feature type="DNA-binding region" description="Homeobox" evidence="1">
    <location>
        <begin position="95"/>
        <end position="154"/>
    </location>
</feature>
<feature type="region of interest" description="Disordered" evidence="2">
    <location>
        <begin position="152"/>
        <end position="188"/>
    </location>
</feature>
<feature type="short sequence motif" description="Antp-type hexapeptide">
    <location>
        <begin position="83"/>
        <end position="88"/>
    </location>
</feature>
<feature type="compositionally biased region" description="Basic and acidic residues" evidence="2">
    <location>
        <begin position="152"/>
        <end position="176"/>
    </location>
</feature>
<comment type="function">
    <text>Sequence-specific transcription factor which is part of a developmental regulatory system that provides cells with specific positional identities on the anterior-posterior axis.</text>
</comment>
<comment type="subcellular location">
    <subcellularLocation>
        <location>Nucleus</location>
    </subcellularLocation>
</comment>
<comment type="similarity">
    <text evidence="3">Belongs to the Antp homeobox family.</text>
</comment>
<dbReference type="EMBL" id="X57158">
    <property type="protein sequence ID" value="CAA40445.1"/>
    <property type="molecule type" value="mRNA"/>
</dbReference>
<dbReference type="PIR" id="I50145">
    <property type="entry name" value="I50145"/>
</dbReference>
<dbReference type="RefSeq" id="NP_997060.1">
    <property type="nucleotide sequence ID" value="NM_207177.2"/>
</dbReference>
<dbReference type="SMR" id="P23459"/>
<dbReference type="FunCoup" id="P23459">
    <property type="interactions" value="175"/>
</dbReference>
<dbReference type="PaxDb" id="9031-ENSGALP00000037897"/>
<dbReference type="GeneID" id="396301"/>
<dbReference type="KEGG" id="gga:396301"/>
<dbReference type="CTD" id="3234"/>
<dbReference type="VEuPathDB" id="HostDB:geneid_396301"/>
<dbReference type="eggNOG" id="KOG0489">
    <property type="taxonomic scope" value="Eukaryota"/>
</dbReference>
<dbReference type="HOGENOM" id="CLU_061398_1_0_1"/>
<dbReference type="InParanoid" id="P23459"/>
<dbReference type="OrthoDB" id="6159439at2759"/>
<dbReference type="PhylomeDB" id="P23459"/>
<dbReference type="PRO" id="PR:P23459"/>
<dbReference type="Proteomes" id="UP000000539">
    <property type="component" value="Chromosome 7"/>
</dbReference>
<dbReference type="Bgee" id="ENSGALG00000037272">
    <property type="expression patterns" value="Expressed in kidney and 4 other cell types or tissues"/>
</dbReference>
<dbReference type="GO" id="GO:0005634">
    <property type="term" value="C:nucleus"/>
    <property type="evidence" value="ECO:0000318"/>
    <property type="project" value="GO_Central"/>
</dbReference>
<dbReference type="GO" id="GO:0000981">
    <property type="term" value="F:DNA-binding transcription factor activity, RNA polymerase II-specific"/>
    <property type="evidence" value="ECO:0000318"/>
    <property type="project" value="GO_Central"/>
</dbReference>
<dbReference type="GO" id="GO:0000977">
    <property type="term" value="F:RNA polymerase II transcription regulatory region sequence-specific DNA binding"/>
    <property type="evidence" value="ECO:0000318"/>
    <property type="project" value="GO_Central"/>
</dbReference>
<dbReference type="GO" id="GO:0006357">
    <property type="term" value="P:regulation of transcription by RNA polymerase II"/>
    <property type="evidence" value="ECO:0000318"/>
    <property type="project" value="GO_Central"/>
</dbReference>
<dbReference type="CDD" id="cd00086">
    <property type="entry name" value="homeodomain"/>
    <property type="match status" value="1"/>
</dbReference>
<dbReference type="FunFam" id="1.10.10.60:FF:000072">
    <property type="entry name" value="Homeobox protein Hox-B8"/>
    <property type="match status" value="1"/>
</dbReference>
<dbReference type="Gene3D" id="1.10.10.60">
    <property type="entry name" value="Homeodomain-like"/>
    <property type="match status" value="1"/>
</dbReference>
<dbReference type="InterPro" id="IPR050948">
    <property type="entry name" value="Antp_homeobox_TF"/>
</dbReference>
<dbReference type="InterPro" id="IPR001356">
    <property type="entry name" value="HD"/>
</dbReference>
<dbReference type="InterPro" id="IPR020479">
    <property type="entry name" value="HD_metazoa"/>
</dbReference>
<dbReference type="InterPro" id="IPR001827">
    <property type="entry name" value="Homeobox_Antennapedia_CS"/>
</dbReference>
<dbReference type="InterPro" id="IPR017970">
    <property type="entry name" value="Homeobox_CS"/>
</dbReference>
<dbReference type="InterPro" id="IPR009057">
    <property type="entry name" value="Homeodomain-like_sf"/>
</dbReference>
<dbReference type="InterPro" id="IPR000047">
    <property type="entry name" value="HTH_motif"/>
</dbReference>
<dbReference type="PANTHER" id="PTHR46166">
    <property type="entry name" value="HOMEOBOX DOMAIN-CONTAINING PROTEIN"/>
    <property type="match status" value="1"/>
</dbReference>
<dbReference type="PANTHER" id="PTHR46166:SF1">
    <property type="entry name" value="HOMEOBOX PROTEIN HOX-D8"/>
    <property type="match status" value="1"/>
</dbReference>
<dbReference type="Pfam" id="PF00046">
    <property type="entry name" value="Homeodomain"/>
    <property type="match status" value="1"/>
</dbReference>
<dbReference type="PRINTS" id="PR00024">
    <property type="entry name" value="HOMEOBOX"/>
</dbReference>
<dbReference type="PRINTS" id="PR00031">
    <property type="entry name" value="HTHREPRESSR"/>
</dbReference>
<dbReference type="SMART" id="SM00389">
    <property type="entry name" value="HOX"/>
    <property type="match status" value="1"/>
</dbReference>
<dbReference type="SUPFAM" id="SSF46689">
    <property type="entry name" value="Homeodomain-like"/>
    <property type="match status" value="1"/>
</dbReference>
<dbReference type="PROSITE" id="PS00032">
    <property type="entry name" value="ANTENNAPEDIA"/>
    <property type="match status" value="1"/>
</dbReference>
<dbReference type="PROSITE" id="PS00027">
    <property type="entry name" value="HOMEOBOX_1"/>
    <property type="match status" value="1"/>
</dbReference>
<dbReference type="PROSITE" id="PS50071">
    <property type="entry name" value="HOMEOBOX_2"/>
    <property type="match status" value="1"/>
</dbReference>
<proteinExistence type="evidence at transcript level"/>
<gene>
    <name type="primary">HOXD8</name>
    <name type="synonym">CHOX-M</name>
</gene>